<evidence type="ECO:0000255" key="1">
    <source>
        <dbReference type="HAMAP-Rule" id="MF_01872"/>
    </source>
</evidence>
<organism>
    <name type="scientific">Escherichia coli O139:H28 (strain E24377A / ETEC)</name>
    <dbReference type="NCBI Taxonomy" id="331111"/>
    <lineage>
        <taxon>Bacteria</taxon>
        <taxon>Pseudomonadati</taxon>
        <taxon>Pseudomonadota</taxon>
        <taxon>Gammaproteobacteria</taxon>
        <taxon>Enterobacterales</taxon>
        <taxon>Enterobacteriaceae</taxon>
        <taxon>Escherichia</taxon>
    </lineage>
</organism>
<accession>A7ZQ20</accession>
<reference key="1">
    <citation type="journal article" date="2008" name="J. Bacteriol.">
        <title>The pangenome structure of Escherichia coli: comparative genomic analysis of E. coli commensal and pathogenic isolates.</title>
        <authorList>
            <person name="Rasko D.A."/>
            <person name="Rosovitz M.J."/>
            <person name="Myers G.S.A."/>
            <person name="Mongodin E.F."/>
            <person name="Fricke W.F."/>
            <person name="Gajer P."/>
            <person name="Crabtree J."/>
            <person name="Sebaihia M."/>
            <person name="Thomson N.R."/>
            <person name="Chaudhuri R."/>
            <person name="Henderson I.R."/>
            <person name="Sperandio V."/>
            <person name="Ravel J."/>
        </authorList>
    </citation>
    <scope>NUCLEOTIDE SEQUENCE [LARGE SCALE GENOMIC DNA]</scope>
    <source>
        <strain>E24377A / ETEC</strain>
    </source>
</reference>
<sequence length="245" mass="27236">MSQSTSVLRRNGFTFKQFFVAHDRCAMKVGTDGILLGAWAPVAGVKRCLDIGAGSGLLALMLAQRTDDSVIIDAVELESEAAAQAQENINQSPWAERINVHTADIQQWITQQTVRFDLIISNPPYYQQGVECATPQREQARYTTTLDHPSLLTCAAECITEEGFFCVVLPEQIGNGFTELALSMGWHLRLRTDVAENEARLPHRVLLAFSPQAGECFSDRLVIRGPDQNYSEAYTALTQAFYLFM</sequence>
<protein>
    <recommendedName>
        <fullName evidence="1">tRNA1(Val) (adenine(37)-N6)-methyltransferase</fullName>
        <ecNumber evidence="1">2.1.1.223</ecNumber>
    </recommendedName>
    <alternativeName>
        <fullName evidence="1">tRNA m6A37 methyltransferase</fullName>
    </alternativeName>
</protein>
<gene>
    <name evidence="1" type="primary">yfiC</name>
    <name type="ordered locus">EcE24377A_2861</name>
</gene>
<dbReference type="EC" id="2.1.1.223" evidence="1"/>
<dbReference type="EMBL" id="CP000800">
    <property type="protein sequence ID" value="ABV20713.1"/>
    <property type="molecule type" value="Genomic_DNA"/>
</dbReference>
<dbReference type="SMR" id="A7ZQ20"/>
<dbReference type="KEGG" id="ecw:EcE24377A_2861"/>
<dbReference type="HOGENOM" id="CLU_061983_0_0_6"/>
<dbReference type="Proteomes" id="UP000001122">
    <property type="component" value="Chromosome"/>
</dbReference>
<dbReference type="GO" id="GO:0005737">
    <property type="term" value="C:cytoplasm"/>
    <property type="evidence" value="ECO:0007669"/>
    <property type="project" value="UniProtKB-SubCell"/>
</dbReference>
<dbReference type="GO" id="GO:0003676">
    <property type="term" value="F:nucleic acid binding"/>
    <property type="evidence" value="ECO:0007669"/>
    <property type="project" value="InterPro"/>
</dbReference>
<dbReference type="GO" id="GO:0016430">
    <property type="term" value="F:tRNA (adenine-N6)-methyltransferase activity"/>
    <property type="evidence" value="ECO:0007669"/>
    <property type="project" value="UniProtKB-UniRule"/>
</dbReference>
<dbReference type="GO" id="GO:0032259">
    <property type="term" value="P:methylation"/>
    <property type="evidence" value="ECO:0007669"/>
    <property type="project" value="UniProtKB-KW"/>
</dbReference>
<dbReference type="GO" id="GO:0008033">
    <property type="term" value="P:tRNA processing"/>
    <property type="evidence" value="ECO:0007669"/>
    <property type="project" value="UniProtKB-UniRule"/>
</dbReference>
<dbReference type="CDD" id="cd02440">
    <property type="entry name" value="AdoMet_MTases"/>
    <property type="match status" value="1"/>
</dbReference>
<dbReference type="FunFam" id="3.40.50.150:FF:000087">
    <property type="entry name" value="tRNA1(Val) (adenine(37)-N6)-methyltransferase"/>
    <property type="match status" value="1"/>
</dbReference>
<dbReference type="Gene3D" id="3.40.50.150">
    <property type="entry name" value="Vaccinia Virus protein VP39"/>
    <property type="match status" value="1"/>
</dbReference>
<dbReference type="HAMAP" id="MF_01872">
    <property type="entry name" value="tRNA_methyltr_YfiC"/>
    <property type="match status" value="1"/>
</dbReference>
<dbReference type="InterPro" id="IPR002052">
    <property type="entry name" value="DNA_methylase_N6_adenine_CS"/>
</dbReference>
<dbReference type="InterPro" id="IPR029063">
    <property type="entry name" value="SAM-dependent_MTases_sf"/>
</dbReference>
<dbReference type="InterPro" id="IPR007848">
    <property type="entry name" value="Small_mtfrase_dom"/>
</dbReference>
<dbReference type="InterPro" id="IPR050210">
    <property type="entry name" value="tRNA_Adenine-N(6)_MTase"/>
</dbReference>
<dbReference type="InterPro" id="IPR022882">
    <property type="entry name" value="tRNA_adenine-N6_MeTrfase"/>
</dbReference>
<dbReference type="NCBIfam" id="NF047853">
    <property type="entry name" value="tRm6a37MtseTrmN"/>
    <property type="match status" value="1"/>
</dbReference>
<dbReference type="PANTHER" id="PTHR47739">
    <property type="entry name" value="TRNA1(VAL) (ADENINE(37)-N6)-METHYLTRANSFERASE"/>
    <property type="match status" value="1"/>
</dbReference>
<dbReference type="PANTHER" id="PTHR47739:SF1">
    <property type="entry name" value="TRNA1(VAL) (ADENINE(37)-N6)-METHYLTRANSFERASE"/>
    <property type="match status" value="1"/>
</dbReference>
<dbReference type="Pfam" id="PF05175">
    <property type="entry name" value="MTS"/>
    <property type="match status" value="1"/>
</dbReference>
<dbReference type="SUPFAM" id="SSF53335">
    <property type="entry name" value="S-adenosyl-L-methionine-dependent methyltransferases"/>
    <property type="match status" value="1"/>
</dbReference>
<dbReference type="PROSITE" id="PS00092">
    <property type="entry name" value="N6_MTASE"/>
    <property type="match status" value="1"/>
</dbReference>
<comment type="function">
    <text evidence="1">Specifically methylates the adenine in position 37 of tRNA(1)(Val) (anticodon cmo5UAC).</text>
</comment>
<comment type="catalytic activity">
    <reaction evidence="1">
        <text>adenosine(37) in tRNA1(Val) + S-adenosyl-L-methionine = N(6)-methyladenosine(37) in tRNA1(Val) + S-adenosyl-L-homocysteine + H(+)</text>
        <dbReference type="Rhea" id="RHEA:43160"/>
        <dbReference type="Rhea" id="RHEA-COMP:10369"/>
        <dbReference type="Rhea" id="RHEA-COMP:10370"/>
        <dbReference type="ChEBI" id="CHEBI:15378"/>
        <dbReference type="ChEBI" id="CHEBI:57856"/>
        <dbReference type="ChEBI" id="CHEBI:59789"/>
        <dbReference type="ChEBI" id="CHEBI:74411"/>
        <dbReference type="ChEBI" id="CHEBI:74449"/>
        <dbReference type="EC" id="2.1.1.223"/>
    </reaction>
</comment>
<comment type="subcellular location">
    <subcellularLocation>
        <location evidence="1">Cytoplasm</location>
    </subcellularLocation>
</comment>
<comment type="similarity">
    <text evidence="1">Belongs to the methyltransferase superfamily. tRNA (adenine-N(6)-)-methyltransferase family.</text>
</comment>
<proteinExistence type="inferred from homology"/>
<name>TRMN6_ECO24</name>
<feature type="chain" id="PRO_0000387365" description="tRNA1(Val) (adenine(37)-N6)-methyltransferase">
    <location>
        <begin position="1"/>
        <end position="245"/>
    </location>
</feature>
<keyword id="KW-0963">Cytoplasm</keyword>
<keyword id="KW-0489">Methyltransferase</keyword>
<keyword id="KW-1185">Reference proteome</keyword>
<keyword id="KW-0949">S-adenosyl-L-methionine</keyword>
<keyword id="KW-0808">Transferase</keyword>
<keyword id="KW-0819">tRNA processing</keyword>